<protein>
    <recommendedName>
        <fullName evidence="1">Large ribosomal subunit protein bL20c</fullName>
    </recommendedName>
    <alternativeName>
        <fullName evidence="2">50S ribosomal protein L20, chloroplastic</fullName>
    </alternativeName>
</protein>
<reference key="1">
    <citation type="journal article" date="2007" name="Mol. Phylogenet. Evol.">
        <title>Phylogenetic and evolutionary implications of complete chloroplast genome sequences of four early-diverging angiosperms: Buxus (Buxaceae), Chloranthus (Chloranthaceae), Dioscorea (Dioscoreaceae), and Illicium (Schisandraceae).</title>
        <authorList>
            <person name="Hansen D.R."/>
            <person name="Dastidar S.G."/>
            <person name="Cai Z."/>
            <person name="Penaflor C."/>
            <person name="Kuehl J.V."/>
            <person name="Boore J.L."/>
            <person name="Jansen R.K."/>
        </authorList>
    </citation>
    <scope>NUCLEOTIDE SEQUENCE [LARGE SCALE GENOMIC DNA]</scope>
</reference>
<proteinExistence type="inferred from homology"/>
<accession>A6MMN0</accession>
<dbReference type="EMBL" id="EF380353">
    <property type="protein sequence ID" value="ABR01453.1"/>
    <property type="molecule type" value="Genomic_DNA"/>
</dbReference>
<dbReference type="RefSeq" id="YP_001294375.1">
    <property type="nucleotide sequence ID" value="NC_009601.1"/>
</dbReference>
<dbReference type="SMR" id="A6MMN0"/>
<dbReference type="GeneID" id="5236570"/>
<dbReference type="GO" id="GO:0009507">
    <property type="term" value="C:chloroplast"/>
    <property type="evidence" value="ECO:0007669"/>
    <property type="project" value="UniProtKB-SubCell"/>
</dbReference>
<dbReference type="GO" id="GO:1990904">
    <property type="term" value="C:ribonucleoprotein complex"/>
    <property type="evidence" value="ECO:0007669"/>
    <property type="project" value="UniProtKB-KW"/>
</dbReference>
<dbReference type="GO" id="GO:0005840">
    <property type="term" value="C:ribosome"/>
    <property type="evidence" value="ECO:0007669"/>
    <property type="project" value="UniProtKB-KW"/>
</dbReference>
<dbReference type="GO" id="GO:0019843">
    <property type="term" value="F:rRNA binding"/>
    <property type="evidence" value="ECO:0007669"/>
    <property type="project" value="UniProtKB-UniRule"/>
</dbReference>
<dbReference type="GO" id="GO:0003735">
    <property type="term" value="F:structural constituent of ribosome"/>
    <property type="evidence" value="ECO:0007669"/>
    <property type="project" value="InterPro"/>
</dbReference>
<dbReference type="GO" id="GO:0000027">
    <property type="term" value="P:ribosomal large subunit assembly"/>
    <property type="evidence" value="ECO:0007669"/>
    <property type="project" value="UniProtKB-UniRule"/>
</dbReference>
<dbReference type="GO" id="GO:0006412">
    <property type="term" value="P:translation"/>
    <property type="evidence" value="ECO:0007669"/>
    <property type="project" value="InterPro"/>
</dbReference>
<dbReference type="CDD" id="cd07026">
    <property type="entry name" value="Ribosomal_L20"/>
    <property type="match status" value="1"/>
</dbReference>
<dbReference type="FunFam" id="1.10.1900.20:FF:000002">
    <property type="entry name" value="50S ribosomal protein L20, chloroplastic"/>
    <property type="match status" value="1"/>
</dbReference>
<dbReference type="Gene3D" id="6.10.160.10">
    <property type="match status" value="1"/>
</dbReference>
<dbReference type="Gene3D" id="1.10.1900.20">
    <property type="entry name" value="Ribosomal protein L20"/>
    <property type="match status" value="1"/>
</dbReference>
<dbReference type="HAMAP" id="MF_00382">
    <property type="entry name" value="Ribosomal_bL20"/>
    <property type="match status" value="1"/>
</dbReference>
<dbReference type="InterPro" id="IPR005813">
    <property type="entry name" value="Ribosomal_bL20"/>
</dbReference>
<dbReference type="InterPro" id="IPR049946">
    <property type="entry name" value="RIBOSOMAL_L20_CS"/>
</dbReference>
<dbReference type="InterPro" id="IPR035566">
    <property type="entry name" value="Ribosomal_protein_bL20_C"/>
</dbReference>
<dbReference type="NCBIfam" id="TIGR01032">
    <property type="entry name" value="rplT_bact"/>
    <property type="match status" value="1"/>
</dbReference>
<dbReference type="PANTHER" id="PTHR10986">
    <property type="entry name" value="39S RIBOSOMAL PROTEIN L20"/>
    <property type="match status" value="1"/>
</dbReference>
<dbReference type="Pfam" id="PF00453">
    <property type="entry name" value="Ribosomal_L20"/>
    <property type="match status" value="1"/>
</dbReference>
<dbReference type="PRINTS" id="PR00062">
    <property type="entry name" value="RIBOSOMALL20"/>
</dbReference>
<dbReference type="SUPFAM" id="SSF74731">
    <property type="entry name" value="Ribosomal protein L20"/>
    <property type="match status" value="1"/>
</dbReference>
<dbReference type="PROSITE" id="PS00937">
    <property type="entry name" value="RIBOSOMAL_L20"/>
    <property type="match status" value="1"/>
</dbReference>
<name>RK20_DIOEL</name>
<feature type="chain" id="PRO_0000355501" description="Large ribosomal subunit protein bL20c">
    <location>
        <begin position="1"/>
        <end position="122"/>
    </location>
</feature>
<sequence length="122" mass="14730">MTRVRRGYTARRRRIKIRLFASTFRGAHSRLTRTTTQQKMRALVSSHRDRGRQKRDFRRLWITRINAVTRDNGVFHSYSKFIHNLYKRQLLLNRKILAQIAIENKNCLYMISNKISQIKEII</sequence>
<comment type="function">
    <text evidence="1">Binds directly to 23S ribosomal RNA and is necessary for the in vitro assembly process of the 50S ribosomal subunit. It is not involved in the protein synthesizing functions of that subunit.</text>
</comment>
<comment type="subcellular location">
    <subcellularLocation>
        <location>Plastid</location>
        <location>Chloroplast</location>
    </subcellularLocation>
</comment>
<comment type="similarity">
    <text evidence="1">Belongs to the bacterial ribosomal protein bL20 family.</text>
</comment>
<gene>
    <name evidence="1" type="primary">rpl20</name>
</gene>
<geneLocation type="chloroplast"/>
<organism>
    <name type="scientific">Dioscorea elephantipes</name>
    <name type="common">Elephant's foot yam</name>
    <name type="synonym">Testudinaria elephantipes</name>
    <dbReference type="NCBI Taxonomy" id="145284"/>
    <lineage>
        <taxon>Eukaryota</taxon>
        <taxon>Viridiplantae</taxon>
        <taxon>Streptophyta</taxon>
        <taxon>Embryophyta</taxon>
        <taxon>Tracheophyta</taxon>
        <taxon>Spermatophyta</taxon>
        <taxon>Magnoliopsida</taxon>
        <taxon>Liliopsida</taxon>
        <taxon>Dioscoreales</taxon>
        <taxon>Dioscoreaceae</taxon>
        <taxon>Dioscorea</taxon>
    </lineage>
</organism>
<keyword id="KW-0150">Chloroplast</keyword>
<keyword id="KW-0934">Plastid</keyword>
<keyword id="KW-0687">Ribonucleoprotein</keyword>
<keyword id="KW-0689">Ribosomal protein</keyword>
<keyword id="KW-0694">RNA-binding</keyword>
<keyword id="KW-0699">rRNA-binding</keyword>
<evidence type="ECO:0000255" key="1">
    <source>
        <dbReference type="HAMAP-Rule" id="MF_00382"/>
    </source>
</evidence>
<evidence type="ECO:0000305" key="2"/>